<evidence type="ECO:0000255" key="1">
    <source>
        <dbReference type="HAMAP-Rule" id="MF_01973"/>
    </source>
</evidence>
<evidence type="ECO:0000255" key="2">
    <source>
        <dbReference type="PROSITE-ProRule" id="PRU01122"/>
    </source>
</evidence>
<evidence type="ECO:0000255" key="3">
    <source>
        <dbReference type="PROSITE-ProRule" id="PRU01123"/>
    </source>
</evidence>
<evidence type="ECO:0000269" key="4">
    <source>
    </source>
</evidence>
<protein>
    <recommendedName>
        <fullName evidence="1">Lon protease</fullName>
        <ecNumber evidence="1">3.4.21.53</ecNumber>
    </recommendedName>
    <alternativeName>
        <fullName evidence="1">ATP-dependent protease La</fullName>
    </alternativeName>
</protein>
<comment type="function">
    <text evidence="1">ATP-dependent serine protease that mediates the selective degradation of mutant and abnormal proteins as well as certain short-lived regulatory proteins. Required for cellular homeostasis and for survival from DNA damage and developmental changes induced by stress. Degrades polypeptides processively to yield small peptide fragments that are 5 to 10 amino acids long. Binds to DNA in a double-stranded, site-specific manner.</text>
</comment>
<comment type="catalytic activity">
    <reaction evidence="1">
        <text>Hydrolysis of proteins in presence of ATP.</text>
        <dbReference type="EC" id="3.4.21.53"/>
    </reaction>
</comment>
<comment type="subunit">
    <text evidence="1 4">Homohexamer. Organized in a ring with a central cavity.</text>
</comment>
<comment type="subcellular location">
    <subcellularLocation>
        <location evidence="1">Cytoplasm</location>
    </subcellularLocation>
</comment>
<comment type="induction">
    <text evidence="1">By heat shock.</text>
</comment>
<comment type="similarity">
    <text evidence="1">Belongs to the peptidase S16 family.</text>
</comment>
<reference key="1">
    <citation type="journal article" date="1998" name="Nature">
        <title>The complete genome of the hyperthermophilic bacterium Aquifex aeolicus.</title>
        <authorList>
            <person name="Deckert G."/>
            <person name="Warren P.V."/>
            <person name="Gaasterland T."/>
            <person name="Young W.G."/>
            <person name="Lenox A.L."/>
            <person name="Graham D.E."/>
            <person name="Overbeek R."/>
            <person name="Snead M.A."/>
            <person name="Keller M."/>
            <person name="Aujay M."/>
            <person name="Huber R."/>
            <person name="Feldman R.A."/>
            <person name="Short J.M."/>
            <person name="Olsen G.J."/>
            <person name="Swanson R.V."/>
        </authorList>
    </citation>
    <scope>NUCLEOTIDE SEQUENCE [LARGE SCALE GENOMIC DNA]</scope>
    <source>
        <strain>VF5</strain>
    </source>
</reference>
<reference key="2">
    <citation type="journal article" date="2010" name="J. Mol. Biol.">
        <title>Crystal structures of Bacillus subtilis Lon protease.</title>
        <authorList>
            <person name="Duman R.E."/>
            <person name="Loewe J."/>
        </authorList>
    </citation>
    <scope>SUBUNIT</scope>
</reference>
<dbReference type="EC" id="3.4.21.53" evidence="1"/>
<dbReference type="EMBL" id="AE000657">
    <property type="protein sequence ID" value="AAC06568.1"/>
    <property type="molecule type" value="Genomic_DNA"/>
</dbReference>
<dbReference type="PIR" id="A70322">
    <property type="entry name" value="A70322"/>
</dbReference>
<dbReference type="RefSeq" id="NP_213165.1">
    <property type="nucleotide sequence ID" value="NC_000918.1"/>
</dbReference>
<dbReference type="SMR" id="O66605"/>
<dbReference type="FunCoup" id="O66605">
    <property type="interactions" value="440"/>
</dbReference>
<dbReference type="STRING" id="224324.aq_242"/>
<dbReference type="MEROPS" id="S16.001"/>
<dbReference type="EnsemblBacteria" id="AAC06568">
    <property type="protein sequence ID" value="AAC06568"/>
    <property type="gene ID" value="aq_242"/>
</dbReference>
<dbReference type="KEGG" id="aae:aq_242"/>
<dbReference type="PATRIC" id="fig|224324.8.peg.197"/>
<dbReference type="eggNOG" id="COG0466">
    <property type="taxonomic scope" value="Bacteria"/>
</dbReference>
<dbReference type="HOGENOM" id="CLU_004109_4_3_0"/>
<dbReference type="InParanoid" id="O66605"/>
<dbReference type="OrthoDB" id="9803599at2"/>
<dbReference type="Proteomes" id="UP000000798">
    <property type="component" value="Chromosome"/>
</dbReference>
<dbReference type="GO" id="GO:0005737">
    <property type="term" value="C:cytoplasm"/>
    <property type="evidence" value="ECO:0007669"/>
    <property type="project" value="UniProtKB-SubCell"/>
</dbReference>
<dbReference type="GO" id="GO:0005524">
    <property type="term" value="F:ATP binding"/>
    <property type="evidence" value="ECO:0007669"/>
    <property type="project" value="UniProtKB-UniRule"/>
</dbReference>
<dbReference type="GO" id="GO:0016887">
    <property type="term" value="F:ATP hydrolysis activity"/>
    <property type="evidence" value="ECO:0007669"/>
    <property type="project" value="UniProtKB-UniRule"/>
</dbReference>
<dbReference type="GO" id="GO:0004176">
    <property type="term" value="F:ATP-dependent peptidase activity"/>
    <property type="evidence" value="ECO:0007669"/>
    <property type="project" value="UniProtKB-UniRule"/>
</dbReference>
<dbReference type="GO" id="GO:0043565">
    <property type="term" value="F:sequence-specific DNA binding"/>
    <property type="evidence" value="ECO:0007669"/>
    <property type="project" value="UniProtKB-UniRule"/>
</dbReference>
<dbReference type="GO" id="GO:0004252">
    <property type="term" value="F:serine-type endopeptidase activity"/>
    <property type="evidence" value="ECO:0007669"/>
    <property type="project" value="UniProtKB-UniRule"/>
</dbReference>
<dbReference type="GO" id="GO:0034605">
    <property type="term" value="P:cellular response to heat"/>
    <property type="evidence" value="ECO:0007669"/>
    <property type="project" value="UniProtKB-UniRule"/>
</dbReference>
<dbReference type="GO" id="GO:0006515">
    <property type="term" value="P:protein quality control for misfolded or incompletely synthesized proteins"/>
    <property type="evidence" value="ECO:0007669"/>
    <property type="project" value="UniProtKB-UniRule"/>
</dbReference>
<dbReference type="CDD" id="cd19500">
    <property type="entry name" value="RecA-like_Lon"/>
    <property type="match status" value="1"/>
</dbReference>
<dbReference type="FunFam" id="3.40.50.300:FF:000382">
    <property type="entry name" value="Lon protease homolog 2, peroxisomal"/>
    <property type="match status" value="1"/>
</dbReference>
<dbReference type="Gene3D" id="1.10.8.60">
    <property type="match status" value="1"/>
</dbReference>
<dbReference type="Gene3D" id="1.20.5.5270">
    <property type="match status" value="1"/>
</dbReference>
<dbReference type="Gene3D" id="1.20.58.1480">
    <property type="match status" value="1"/>
</dbReference>
<dbReference type="Gene3D" id="3.30.230.10">
    <property type="match status" value="1"/>
</dbReference>
<dbReference type="Gene3D" id="2.30.130.40">
    <property type="entry name" value="LON domain-like"/>
    <property type="match status" value="1"/>
</dbReference>
<dbReference type="Gene3D" id="3.40.50.300">
    <property type="entry name" value="P-loop containing nucleotide triphosphate hydrolases"/>
    <property type="match status" value="1"/>
</dbReference>
<dbReference type="HAMAP" id="MF_01973">
    <property type="entry name" value="lon_bact"/>
    <property type="match status" value="1"/>
</dbReference>
<dbReference type="InterPro" id="IPR003593">
    <property type="entry name" value="AAA+_ATPase"/>
</dbReference>
<dbReference type="InterPro" id="IPR003959">
    <property type="entry name" value="ATPase_AAA_core"/>
</dbReference>
<dbReference type="InterPro" id="IPR027543">
    <property type="entry name" value="Lon_bac"/>
</dbReference>
<dbReference type="InterPro" id="IPR004815">
    <property type="entry name" value="Lon_bac/euk-typ"/>
</dbReference>
<dbReference type="InterPro" id="IPR054594">
    <property type="entry name" value="Lon_lid"/>
</dbReference>
<dbReference type="InterPro" id="IPR008269">
    <property type="entry name" value="Lon_proteolytic"/>
</dbReference>
<dbReference type="InterPro" id="IPR027065">
    <property type="entry name" value="Lon_Prtase"/>
</dbReference>
<dbReference type="InterPro" id="IPR003111">
    <property type="entry name" value="Lon_prtase_N"/>
</dbReference>
<dbReference type="InterPro" id="IPR046336">
    <property type="entry name" value="Lon_prtase_N_sf"/>
</dbReference>
<dbReference type="InterPro" id="IPR027417">
    <property type="entry name" value="P-loop_NTPase"/>
</dbReference>
<dbReference type="InterPro" id="IPR008268">
    <property type="entry name" value="Peptidase_S16_AS"/>
</dbReference>
<dbReference type="InterPro" id="IPR015947">
    <property type="entry name" value="PUA-like_sf"/>
</dbReference>
<dbReference type="InterPro" id="IPR020568">
    <property type="entry name" value="Ribosomal_Su5_D2-typ_SF"/>
</dbReference>
<dbReference type="InterPro" id="IPR014721">
    <property type="entry name" value="Ribsml_uS5_D2-typ_fold_subgr"/>
</dbReference>
<dbReference type="NCBIfam" id="TIGR00763">
    <property type="entry name" value="lon"/>
    <property type="match status" value="1"/>
</dbReference>
<dbReference type="PANTHER" id="PTHR10046">
    <property type="entry name" value="ATP DEPENDENT LON PROTEASE FAMILY MEMBER"/>
    <property type="match status" value="1"/>
</dbReference>
<dbReference type="Pfam" id="PF00004">
    <property type="entry name" value="AAA"/>
    <property type="match status" value="1"/>
</dbReference>
<dbReference type="Pfam" id="PF05362">
    <property type="entry name" value="Lon_C"/>
    <property type="match status" value="1"/>
</dbReference>
<dbReference type="Pfam" id="PF22667">
    <property type="entry name" value="Lon_lid"/>
    <property type="match status" value="1"/>
</dbReference>
<dbReference type="Pfam" id="PF02190">
    <property type="entry name" value="LON_substr_bdg"/>
    <property type="match status" value="1"/>
</dbReference>
<dbReference type="PIRSF" id="PIRSF001174">
    <property type="entry name" value="Lon_proteas"/>
    <property type="match status" value="1"/>
</dbReference>
<dbReference type="PRINTS" id="PR00830">
    <property type="entry name" value="ENDOLAPTASE"/>
</dbReference>
<dbReference type="SMART" id="SM00382">
    <property type="entry name" value="AAA"/>
    <property type="match status" value="1"/>
</dbReference>
<dbReference type="SMART" id="SM00464">
    <property type="entry name" value="LON"/>
    <property type="match status" value="1"/>
</dbReference>
<dbReference type="SUPFAM" id="SSF52540">
    <property type="entry name" value="P-loop containing nucleoside triphosphate hydrolases"/>
    <property type="match status" value="1"/>
</dbReference>
<dbReference type="SUPFAM" id="SSF88697">
    <property type="entry name" value="PUA domain-like"/>
    <property type="match status" value="1"/>
</dbReference>
<dbReference type="SUPFAM" id="SSF54211">
    <property type="entry name" value="Ribosomal protein S5 domain 2-like"/>
    <property type="match status" value="1"/>
</dbReference>
<dbReference type="PROSITE" id="PS51787">
    <property type="entry name" value="LON_N"/>
    <property type="match status" value="1"/>
</dbReference>
<dbReference type="PROSITE" id="PS51786">
    <property type="entry name" value="LON_PROTEOLYTIC"/>
    <property type="match status" value="1"/>
</dbReference>
<dbReference type="PROSITE" id="PS01046">
    <property type="entry name" value="LON_SER"/>
    <property type="match status" value="1"/>
</dbReference>
<organism>
    <name type="scientific">Aquifex aeolicus (strain VF5)</name>
    <dbReference type="NCBI Taxonomy" id="224324"/>
    <lineage>
        <taxon>Bacteria</taxon>
        <taxon>Pseudomonadati</taxon>
        <taxon>Aquificota</taxon>
        <taxon>Aquificia</taxon>
        <taxon>Aquificales</taxon>
        <taxon>Aquificaceae</taxon>
        <taxon>Aquifex</taxon>
    </lineage>
</organism>
<name>LON_AQUAE</name>
<keyword id="KW-0067">ATP-binding</keyword>
<keyword id="KW-0963">Cytoplasm</keyword>
<keyword id="KW-0378">Hydrolase</keyword>
<keyword id="KW-0547">Nucleotide-binding</keyword>
<keyword id="KW-0645">Protease</keyword>
<keyword id="KW-1185">Reference proteome</keyword>
<keyword id="KW-0720">Serine protease</keyword>
<keyword id="KW-0346">Stress response</keyword>
<accession>O66605</accession>
<gene>
    <name evidence="1" type="primary">lon</name>
    <name type="ordered locus">aq_242</name>
</gene>
<proteinExistence type="evidence at protein level"/>
<feature type="chain" id="PRO_0000076114" description="Lon protease">
    <location>
        <begin position="1"/>
        <end position="795"/>
    </location>
</feature>
<feature type="domain" description="Lon N-terminal" evidence="3">
    <location>
        <begin position="17"/>
        <end position="214"/>
    </location>
</feature>
<feature type="domain" description="Lon proteolytic" evidence="2">
    <location>
        <begin position="605"/>
        <end position="787"/>
    </location>
</feature>
<feature type="active site" evidence="1">
    <location>
        <position position="692"/>
    </location>
</feature>
<feature type="active site" evidence="1">
    <location>
        <position position="735"/>
    </location>
</feature>
<feature type="binding site" evidence="1">
    <location>
        <begin position="370"/>
        <end position="377"/>
    </location>
    <ligand>
        <name>ATP</name>
        <dbReference type="ChEBI" id="CHEBI:30616"/>
    </ligand>
</feature>
<sequence>MNELFQTPQVEAGIKEYPLMPLRDIVIFPTMVQPLFVGRRFSIRAIEEANKKDKLIFLVLQKDKDVEEPKEEDIYKVGVVAYILRTVPIEDARVKVLVQGLKRGVIKKLEWKEDHYVAQVDVIEERDIPPESQTIEDKALIKAVKESIDKLVSLGKQIIPDLVVLIKELEEPGKLADMVASILDIKSSQAQEILETFDPRERLKKVYKFLQDEIGLLEVKQRISEIARERMEKEQREYYLRQQLKAIQEELGEAGGIKAEIEEYTKKFEEVKECMPEEGVKEVEKNIKRLERLHPESAEAGVIRTWLDWVLDLPWCTRTEDNYDLERAREILDRDHYDLEKVKDRIIEYLAIRKLTQGKEAPTQILAFVGPPGVGKTSLGRSIAEALGRKFVRIALGGIRDEAEIRGHRRTYVGAMPGRIIQAIKQAGTKNPVIMLDEIDKLAISFQGDPAAALLEVLDPEQNKKFTDLYIGIPFDLSEVIFICTGNRADTIPTPLLDRMELIMLSGYSEEEKLFIAKKHLIPKLIPLHGFSPEEIEFTDEAILEIIRGYTREAGVRNLQRQISAVLRKIAVKKLQGEKGPFNITPELVRKLLGVPRYRPEREKKPLVGVATGLAWTEVGGEIMFIEATKMKGKGSLVLTGSLGDIMKESAQAALSYIRSKAEDYGIDPDIFSQVDVHVHVPEGAVPKDGPSAGVAIATALLSLFTDIPVRMDVAMTGEITLRGRVLPVGGLKEKILAAKRAEIYEVILPAKNKDEVMEELPEYVREKMTLHFVDNLEEVFKIALVREPKPLKEA</sequence>